<dbReference type="EMBL" id="Z49939">
    <property type="protein sequence ID" value="CAA90201.1"/>
    <property type="molecule type" value="Genomic_DNA"/>
</dbReference>
<dbReference type="EMBL" id="BK006946">
    <property type="protein sequence ID" value="DAA10129.1"/>
    <property type="molecule type" value="Genomic_DNA"/>
</dbReference>
<dbReference type="PIR" id="S57597">
    <property type="entry name" value="S57597"/>
</dbReference>
<dbReference type="RefSeq" id="NP_013957.1">
    <property type="nucleotide sequence ID" value="NM_001182737.1"/>
</dbReference>
<dbReference type="PDB" id="4U3M">
    <property type="method" value="X-ray"/>
    <property type="resolution" value="3.00 A"/>
    <property type="chains" value="C0/c0=1-105"/>
</dbReference>
<dbReference type="PDBsum" id="4U3M"/>
<dbReference type="SMR" id="P46784"/>
<dbReference type="BioGRID" id="35408">
    <property type="interactions" value="259"/>
</dbReference>
<dbReference type="ComplexPortal" id="CPX-1599">
    <property type="entry name" value="40S cytosolic small ribosomal subunit"/>
</dbReference>
<dbReference type="FunCoup" id="P46784">
    <property type="interactions" value="1145"/>
</dbReference>
<dbReference type="IntAct" id="P46784">
    <property type="interactions" value="33"/>
</dbReference>
<dbReference type="MINT" id="P46784"/>
<dbReference type="STRING" id="4932.YMR230W"/>
<dbReference type="iPTMnet" id="P46784"/>
<dbReference type="PaxDb" id="4932-YMR230W"/>
<dbReference type="PeptideAtlas" id="P46784"/>
<dbReference type="TopDownProteomics" id="P46784"/>
<dbReference type="EnsemblFungi" id="YMR230W_mRNA">
    <property type="protein sequence ID" value="YMR230W"/>
    <property type="gene ID" value="YMR230W"/>
</dbReference>
<dbReference type="GeneID" id="855270"/>
<dbReference type="KEGG" id="sce:YMR230W"/>
<dbReference type="AGR" id="SGD:S000004843"/>
<dbReference type="SGD" id="S000004843">
    <property type="gene designation" value="RPS10B"/>
</dbReference>
<dbReference type="VEuPathDB" id="FungiDB:YMR230W"/>
<dbReference type="eggNOG" id="KOG3344">
    <property type="taxonomic scope" value="Eukaryota"/>
</dbReference>
<dbReference type="GeneTree" id="ENSGT00940000166022"/>
<dbReference type="HOGENOM" id="CLU_089349_4_1_1"/>
<dbReference type="InParanoid" id="P46784"/>
<dbReference type="OMA" id="ERRFTRN"/>
<dbReference type="OrthoDB" id="5211809at2759"/>
<dbReference type="BioCyc" id="YEAST:G3O-32911-MONOMER"/>
<dbReference type="Reactome" id="R-SCE-156827">
    <property type="pathway name" value="L13a-mediated translational silencing of Ceruloplasmin expression"/>
</dbReference>
<dbReference type="Reactome" id="R-SCE-1799339">
    <property type="pathway name" value="SRP-dependent cotranslational protein targeting to membrane"/>
</dbReference>
<dbReference type="Reactome" id="R-SCE-72649">
    <property type="pathway name" value="Translation initiation complex formation"/>
</dbReference>
<dbReference type="Reactome" id="R-SCE-72689">
    <property type="pathway name" value="Formation of a pool of free 40S subunits"/>
</dbReference>
<dbReference type="Reactome" id="R-SCE-72695">
    <property type="pathway name" value="Formation of the ternary complex, and subsequently, the 43S complex"/>
</dbReference>
<dbReference type="Reactome" id="R-SCE-72702">
    <property type="pathway name" value="Ribosomal scanning and start codon recognition"/>
</dbReference>
<dbReference type="Reactome" id="R-SCE-72706">
    <property type="pathway name" value="GTP hydrolysis and joining of the 60S ribosomal subunit"/>
</dbReference>
<dbReference type="Reactome" id="R-SCE-975956">
    <property type="pathway name" value="Nonsense Mediated Decay (NMD) independent of the Exon Junction Complex (EJC)"/>
</dbReference>
<dbReference type="Reactome" id="R-SCE-975957">
    <property type="pathway name" value="Nonsense Mediated Decay (NMD) enhanced by the Exon Junction Complex (EJC)"/>
</dbReference>
<dbReference type="BioGRID-ORCS" id="855270">
    <property type="hits" value="0 hits in 10 CRISPR screens"/>
</dbReference>
<dbReference type="PRO" id="PR:P46784"/>
<dbReference type="Proteomes" id="UP000002311">
    <property type="component" value="Chromosome XIII"/>
</dbReference>
<dbReference type="RNAct" id="P46784">
    <property type="molecule type" value="protein"/>
</dbReference>
<dbReference type="GO" id="GO:0005829">
    <property type="term" value="C:cytosol"/>
    <property type="evidence" value="ECO:0000304"/>
    <property type="project" value="Reactome"/>
</dbReference>
<dbReference type="GO" id="GO:0022627">
    <property type="term" value="C:cytosolic small ribosomal subunit"/>
    <property type="evidence" value="ECO:0000318"/>
    <property type="project" value="GO_Central"/>
</dbReference>
<dbReference type="GO" id="GO:0003723">
    <property type="term" value="F:RNA binding"/>
    <property type="evidence" value="ECO:0000318"/>
    <property type="project" value="GO_Central"/>
</dbReference>
<dbReference type="GO" id="GO:0003735">
    <property type="term" value="F:structural constituent of ribosome"/>
    <property type="evidence" value="ECO:0000318"/>
    <property type="project" value="GO_Central"/>
</dbReference>
<dbReference type="GO" id="GO:0034198">
    <property type="term" value="P:cellular response to amino acid starvation"/>
    <property type="evidence" value="ECO:0000314"/>
    <property type="project" value="UniProtKB"/>
</dbReference>
<dbReference type="GO" id="GO:0002181">
    <property type="term" value="P:cytoplasmic translation"/>
    <property type="evidence" value="ECO:0000303"/>
    <property type="project" value="SGD"/>
</dbReference>
<dbReference type="GO" id="GO:0045860">
    <property type="term" value="P:positive regulation of protein kinase activity"/>
    <property type="evidence" value="ECO:0000314"/>
    <property type="project" value="UniProtKB"/>
</dbReference>
<dbReference type="GO" id="GO:0001934">
    <property type="term" value="P:positive regulation of protein phosphorylation"/>
    <property type="evidence" value="ECO:0000314"/>
    <property type="project" value="UniProtKB"/>
</dbReference>
<dbReference type="GO" id="GO:0000054">
    <property type="term" value="P:ribosomal subunit export from nucleus"/>
    <property type="evidence" value="ECO:0000316"/>
    <property type="project" value="SGD"/>
</dbReference>
<dbReference type="FunFam" id="1.10.10.10:FF:000025">
    <property type="entry name" value="40S ribosomal protein S10"/>
    <property type="match status" value="1"/>
</dbReference>
<dbReference type="Gene3D" id="1.10.10.10">
    <property type="entry name" value="Winged helix-like DNA-binding domain superfamily/Winged helix DNA-binding domain"/>
    <property type="match status" value="1"/>
</dbReference>
<dbReference type="InterPro" id="IPR005326">
    <property type="entry name" value="Plectin_eS10_N"/>
</dbReference>
<dbReference type="InterPro" id="IPR037447">
    <property type="entry name" value="Ribosomal_eS10"/>
</dbReference>
<dbReference type="InterPro" id="IPR036388">
    <property type="entry name" value="WH-like_DNA-bd_sf"/>
</dbReference>
<dbReference type="InterPro" id="IPR036390">
    <property type="entry name" value="WH_DNA-bd_sf"/>
</dbReference>
<dbReference type="PANTHER" id="PTHR12146">
    <property type="entry name" value="40S RIBOSOMAL PROTEIN S10"/>
    <property type="match status" value="1"/>
</dbReference>
<dbReference type="PANTHER" id="PTHR12146:SF0">
    <property type="entry name" value="RIBOSOMAL PROTEIN S10"/>
    <property type="match status" value="1"/>
</dbReference>
<dbReference type="Pfam" id="PF03501">
    <property type="entry name" value="S10_plectin"/>
    <property type="match status" value="1"/>
</dbReference>
<dbReference type="SUPFAM" id="SSF46785">
    <property type="entry name" value="Winged helix' DNA-binding domain"/>
    <property type="match status" value="1"/>
</dbReference>
<reference key="1">
    <citation type="journal article" date="1997" name="Nature">
        <title>The nucleotide sequence of Saccharomyces cerevisiae chromosome XIII.</title>
        <authorList>
            <person name="Bowman S."/>
            <person name="Churcher C.M."/>
            <person name="Badcock K."/>
            <person name="Brown D."/>
            <person name="Chillingworth T."/>
            <person name="Connor R."/>
            <person name="Dedman K."/>
            <person name="Devlin K."/>
            <person name="Gentles S."/>
            <person name="Hamlin N."/>
            <person name="Hunt S."/>
            <person name="Jagels K."/>
            <person name="Lye G."/>
            <person name="Moule S."/>
            <person name="Odell C."/>
            <person name="Pearson D."/>
            <person name="Rajandream M.A."/>
            <person name="Rice P."/>
            <person name="Skelton J."/>
            <person name="Walsh S.V."/>
            <person name="Whitehead S."/>
            <person name="Barrell B.G."/>
        </authorList>
    </citation>
    <scope>NUCLEOTIDE SEQUENCE [LARGE SCALE GENOMIC DNA]</scope>
    <source>
        <strain>ATCC 204508 / S288c</strain>
    </source>
</reference>
<reference key="2">
    <citation type="journal article" date="2014" name="G3 (Bethesda)">
        <title>The reference genome sequence of Saccharomyces cerevisiae: Then and now.</title>
        <authorList>
            <person name="Engel S.R."/>
            <person name="Dietrich F.S."/>
            <person name="Fisk D.G."/>
            <person name="Binkley G."/>
            <person name="Balakrishnan R."/>
            <person name="Costanzo M.C."/>
            <person name="Dwight S.S."/>
            <person name="Hitz B.C."/>
            <person name="Karra K."/>
            <person name="Nash R.S."/>
            <person name="Weng S."/>
            <person name="Wong E.D."/>
            <person name="Lloyd P."/>
            <person name="Skrzypek M.S."/>
            <person name="Miyasato S.R."/>
            <person name="Simison M."/>
            <person name="Cherry J.M."/>
        </authorList>
    </citation>
    <scope>GENOME REANNOTATION</scope>
    <source>
        <strain>ATCC 204508 / S288c</strain>
    </source>
</reference>
<reference key="3">
    <citation type="journal article" date="1998" name="Yeast">
        <title>The list of cytoplasmic ribosomal proteins of Saccharomyces cerevisiae.</title>
        <authorList>
            <person name="Planta R.J."/>
            <person name="Mager W.H."/>
        </authorList>
    </citation>
    <scope>NOMENCLATURE</scope>
    <scope>SUBUNIT</scope>
</reference>
<reference key="4">
    <citation type="journal article" date="1999" name="J. Biol. Chem.">
        <title>The action of N-terminal acetyltransferases on yeast ribosomal proteins.</title>
        <authorList>
            <person name="Arnold R.J."/>
            <person name="Polevoda B."/>
            <person name="Reilly J.P."/>
            <person name="Sherman F."/>
        </authorList>
    </citation>
    <scope>ANALYSIS OF N-TERMINUS</scope>
</reference>
<reference key="5">
    <citation type="journal article" date="2003" name="Nature">
        <title>Global analysis of protein localization in budding yeast.</title>
        <authorList>
            <person name="Huh W.-K."/>
            <person name="Falvo J.V."/>
            <person name="Gerke L.C."/>
            <person name="Carroll A.S."/>
            <person name="Howson R.W."/>
            <person name="Weissman J.S."/>
            <person name="O'Shea E.K."/>
        </authorList>
    </citation>
    <scope>SUBCELLULAR LOCATION [LARGE SCALE ANALYSIS]</scope>
</reference>
<reference key="6">
    <citation type="journal article" date="2003" name="Nature">
        <title>Global analysis of protein expression in yeast.</title>
        <authorList>
            <person name="Ghaemmaghami S."/>
            <person name="Huh W.-K."/>
            <person name="Bower K."/>
            <person name="Howson R.W."/>
            <person name="Belle A."/>
            <person name="Dephoure N."/>
            <person name="O'Shea E.K."/>
            <person name="Weissman J.S."/>
        </authorList>
    </citation>
    <scope>LEVEL OF PROTEIN EXPRESSION [LARGE SCALE ANALYSIS]</scope>
</reference>
<reference key="7">
    <citation type="journal article" date="2011" name="Science">
        <title>The structure of the eukaryotic ribosome at 3.0 A resolution.</title>
        <authorList>
            <person name="Ben-Shem A."/>
            <person name="Garreau de Loubresse N."/>
            <person name="Melnikov S."/>
            <person name="Jenner L."/>
            <person name="Yusupova G."/>
            <person name="Yusupov M."/>
        </authorList>
    </citation>
    <scope>SUBUNIT</scope>
    <scope>SUBCELLULAR LOCATION</scope>
</reference>
<reference key="8">
    <citation type="journal article" date="2012" name="Proc. Natl. Acad. Sci. U.S.A.">
        <title>N-terminal acetylome analyses and functional insights of the N-terminal acetyltransferase NatB.</title>
        <authorList>
            <person name="Van Damme P."/>
            <person name="Lasa M."/>
            <person name="Polevoda B."/>
            <person name="Gazquez C."/>
            <person name="Elosegui-Artola A."/>
            <person name="Kim D.S."/>
            <person name="De Juan-Pardo E."/>
            <person name="Demeyer K."/>
            <person name="Hole K."/>
            <person name="Larrea E."/>
            <person name="Timmerman E."/>
            <person name="Prieto J."/>
            <person name="Arnesen T."/>
            <person name="Sherman F."/>
            <person name="Gevaert K."/>
            <person name="Aldabe R."/>
        </authorList>
    </citation>
    <scope>IDENTIFICATION BY MASS SPECTROMETRY [LARGE SCALE ANALYSIS]</scope>
</reference>
<reference key="9">
    <citation type="journal article" date="2014" name="Curr. Opin. Struct. Biol.">
        <title>A new system for naming ribosomal proteins.</title>
        <authorList>
            <person name="Ban N."/>
            <person name="Beckmann R."/>
            <person name="Cate J.H.D."/>
            <person name="Dinman J.D."/>
            <person name="Dragon F."/>
            <person name="Ellis S.R."/>
            <person name="Lafontaine D.L.J."/>
            <person name="Lindahl L."/>
            <person name="Liljas A."/>
            <person name="Lipton J.M."/>
            <person name="McAlear M.A."/>
            <person name="Moore P.B."/>
            <person name="Noller H.F."/>
            <person name="Ortega J."/>
            <person name="Panse V.G."/>
            <person name="Ramakrishnan V."/>
            <person name="Spahn C.M.T."/>
            <person name="Steitz T.A."/>
            <person name="Tchorzewski M."/>
            <person name="Tollervey D."/>
            <person name="Warren A.J."/>
            <person name="Williamson J.R."/>
            <person name="Wilson D."/>
            <person name="Yonath A."/>
            <person name="Yusupov M."/>
        </authorList>
    </citation>
    <scope>NOMENCLATURE</scope>
</reference>
<reference key="10">
    <citation type="journal article" date="2015" name="Biochem. J.">
        <title>Gcn1 contacts the small ribosomal protein Rps10, which is required for full activation of the protein kinase Gcn2.</title>
        <authorList>
            <person name="Lee S.J."/>
            <person name="Swanson M.J."/>
            <person name="Sattlegger E."/>
        </authorList>
    </citation>
    <scope>FUNCTION</scope>
    <scope>INTERACTION WITH GCN1</scope>
</reference>
<evidence type="ECO:0000269" key="1">
    <source>
    </source>
</evidence>
<evidence type="ECO:0000269" key="2">
    <source>
    </source>
</evidence>
<evidence type="ECO:0000269" key="3">
    <source>
    </source>
</evidence>
<evidence type="ECO:0000269" key="4">
    <source>
    </source>
</evidence>
<evidence type="ECO:0000269" key="5">
    <source>
    </source>
</evidence>
<evidence type="ECO:0000303" key="6">
    <source>
    </source>
</evidence>
<evidence type="ECO:0000303" key="7">
    <source>
    </source>
</evidence>
<evidence type="ECO:0000305" key="8"/>
<evidence type="ECO:0000305" key="9">
    <source>
    </source>
</evidence>
<evidence type="ECO:0000305" key="10">
    <source>
    </source>
</evidence>
<evidence type="ECO:0007829" key="11">
    <source>
        <dbReference type="PDB" id="4U3M"/>
    </source>
</evidence>
<organism>
    <name type="scientific">Saccharomyces cerevisiae (strain ATCC 204508 / S288c)</name>
    <name type="common">Baker's yeast</name>
    <dbReference type="NCBI Taxonomy" id="559292"/>
    <lineage>
        <taxon>Eukaryota</taxon>
        <taxon>Fungi</taxon>
        <taxon>Dikarya</taxon>
        <taxon>Ascomycota</taxon>
        <taxon>Saccharomycotina</taxon>
        <taxon>Saccharomycetes</taxon>
        <taxon>Saccharomycetales</taxon>
        <taxon>Saccharomycetaceae</taxon>
        <taxon>Saccharomyces</taxon>
    </lineage>
</organism>
<comment type="function">
    <text evidence="5 9">Component of the ribosome, a large ribonucleoprotein complex responsible for the synthesis of proteins in the cell. The small ribosomal subunit (SSU) binds messenger RNAs (mRNAs) and translates the encoded message by selecting cognate aminoacyl-transfer RNA (tRNA) molecules. The large subunit (LSU) contains the ribosomal catalytic site termed the peptidyl transferase center (PTC), which catalyzes the formation of peptide bonds, thereby polymerizing the amino acids delivered by tRNAs into a polypeptide chain. The nascent polypeptides leave the ribosome through a tunnel in the LSU and interact with protein factors that function in enzymatic processing, targeting, and the membrane insertion of nascent chains at the exit of the ribosomal tunnel (PubMed:22096102). eS10 plays a role as a positive regulator of the GCN2 kinase activity by stimulating GCN1-mediated GCN2 activation (PubMed:25437641).</text>
</comment>
<comment type="subunit">
    <text evidence="4 5 10">Component of the small ribosomal subunit (SSU). Mature yeast ribosomes consist of a small (40S) and a large (60S) subunit. The 40S small subunit contains 1 molecule of ribosomal RNA (18S rRNA) and 33 different proteins (encoded by 57 genes). The large 60S subunit contains 3 rRNA molecules (25S, 5.8S and 5S rRNA) and 46 different proteins (encoded by 81 genes) (PubMed:22096102, PubMed:9559554). eS10 interacts with GCN1 (via middle region); this interaction is direct and promotes GCN2 kinase activity (PubMed:25437641).</text>
</comment>
<comment type="subcellular location">
    <subcellularLocation>
        <location evidence="2 4">Cytoplasm</location>
    </subcellularLocation>
</comment>
<comment type="PTM">
    <text evidence="1">The N-terminus is not modified.</text>
</comment>
<comment type="miscellaneous">
    <text evidence="3">Present with 7650 molecules/cell in log phase SD medium.</text>
</comment>
<comment type="miscellaneous">
    <text evidence="8">There are 2 genes for eS10 in yeast.</text>
</comment>
<comment type="similarity">
    <text evidence="8">Belongs to the eukaryotic ribosomal protein eS10 family.</text>
</comment>
<name>RS10B_YEAST</name>
<feature type="chain" id="PRO_0000116377" description="Small ribosomal subunit protein eS10B">
    <location>
        <begin position="1"/>
        <end position="105"/>
    </location>
</feature>
<feature type="helix" evidence="11">
    <location>
        <begin position="5"/>
        <end position="18"/>
    </location>
</feature>
<feature type="strand" evidence="11">
    <location>
        <begin position="19"/>
        <end position="22"/>
    </location>
</feature>
<feature type="strand" evidence="11">
    <location>
        <begin position="33"/>
        <end position="37"/>
    </location>
</feature>
<feature type="helix" evidence="11">
    <location>
        <begin position="39"/>
        <end position="51"/>
    </location>
</feature>
<feature type="strand" evidence="11">
    <location>
        <begin position="54"/>
        <end position="58"/>
    </location>
</feature>
<feature type="strand" evidence="11">
    <location>
        <begin position="65"/>
        <end position="68"/>
    </location>
</feature>
<feature type="helix" evidence="11">
    <location>
        <begin position="70"/>
        <end position="79"/>
    </location>
</feature>
<gene>
    <name evidence="7" type="primary">RPS10B</name>
    <name type="ordered locus">YMR230W</name>
    <name type="ORF">YM9959.12</name>
</gene>
<accession>P46784</accession>
<accession>D6W055</accession>
<protein>
    <recommendedName>
        <fullName evidence="6">Small ribosomal subunit protein eS10B</fullName>
    </recommendedName>
    <alternativeName>
        <fullName evidence="7">40S ribosomal protein S10-B</fullName>
    </alternativeName>
</protein>
<keyword id="KW-0002">3D-structure</keyword>
<keyword id="KW-0963">Cytoplasm</keyword>
<keyword id="KW-1185">Reference proteome</keyword>
<keyword id="KW-0687">Ribonucleoprotein</keyword>
<keyword id="KW-0689">Ribosomal protein</keyword>
<proteinExistence type="evidence at protein level"/>
<sequence>MLMPKQERNKIHQYLFQEGVVVAKKDFNQAKHEEIDTKNLYVIKALQSLTSKGYVKTQFSWQYYYYTLTEEGVEYLREYLNLPEHIVPGTYIQERNPSQRPQRRY</sequence>